<organism>
    <name type="scientific">Geobacillus kaustophilus (strain HTA426)</name>
    <dbReference type="NCBI Taxonomy" id="235909"/>
    <lineage>
        <taxon>Bacteria</taxon>
        <taxon>Bacillati</taxon>
        <taxon>Bacillota</taxon>
        <taxon>Bacilli</taxon>
        <taxon>Bacillales</taxon>
        <taxon>Anoxybacillaceae</taxon>
        <taxon>Geobacillus</taxon>
        <taxon>Geobacillus thermoleovorans group</taxon>
    </lineage>
</organism>
<gene>
    <name evidence="1" type="primary">rpsS</name>
    <name type="ordered locus">GK0110</name>
</gene>
<protein>
    <recommendedName>
        <fullName evidence="1">Small ribosomal subunit protein uS19</fullName>
    </recommendedName>
    <alternativeName>
        <fullName evidence="2">30S ribosomal protein S19</fullName>
    </alternativeName>
</protein>
<keyword id="KW-1185">Reference proteome</keyword>
<keyword id="KW-0687">Ribonucleoprotein</keyword>
<keyword id="KW-0689">Ribosomal protein</keyword>
<keyword id="KW-0694">RNA-binding</keyword>
<keyword id="KW-0699">rRNA-binding</keyword>
<sequence>MGRSLKKGPFCDEHLMKKIEKLNATGQKQVIKTWSRRSTIFPQFVGHTIAVYDGRKHVPVYITEDMVGHKLGEFAPTRTFRGHAGDDKKTKR</sequence>
<name>RS19_GEOKA</name>
<dbReference type="EMBL" id="BA000043">
    <property type="protein sequence ID" value="BAD74395.1"/>
    <property type="molecule type" value="Genomic_DNA"/>
</dbReference>
<dbReference type="RefSeq" id="WP_011229624.1">
    <property type="nucleotide sequence ID" value="NC_006510.1"/>
</dbReference>
<dbReference type="SMR" id="Q5L3Z3"/>
<dbReference type="STRING" id="235909.GK0110"/>
<dbReference type="GeneID" id="32062098"/>
<dbReference type="KEGG" id="gka:GK0110"/>
<dbReference type="eggNOG" id="COG0185">
    <property type="taxonomic scope" value="Bacteria"/>
</dbReference>
<dbReference type="HOGENOM" id="CLU_144911_0_1_9"/>
<dbReference type="Proteomes" id="UP000001172">
    <property type="component" value="Chromosome"/>
</dbReference>
<dbReference type="GO" id="GO:0005737">
    <property type="term" value="C:cytoplasm"/>
    <property type="evidence" value="ECO:0007669"/>
    <property type="project" value="UniProtKB-ARBA"/>
</dbReference>
<dbReference type="GO" id="GO:0015935">
    <property type="term" value="C:small ribosomal subunit"/>
    <property type="evidence" value="ECO:0007669"/>
    <property type="project" value="InterPro"/>
</dbReference>
<dbReference type="GO" id="GO:0019843">
    <property type="term" value="F:rRNA binding"/>
    <property type="evidence" value="ECO:0007669"/>
    <property type="project" value="UniProtKB-UniRule"/>
</dbReference>
<dbReference type="GO" id="GO:0003735">
    <property type="term" value="F:structural constituent of ribosome"/>
    <property type="evidence" value="ECO:0007669"/>
    <property type="project" value="InterPro"/>
</dbReference>
<dbReference type="GO" id="GO:0000028">
    <property type="term" value="P:ribosomal small subunit assembly"/>
    <property type="evidence" value="ECO:0007669"/>
    <property type="project" value="TreeGrafter"/>
</dbReference>
<dbReference type="GO" id="GO:0006412">
    <property type="term" value="P:translation"/>
    <property type="evidence" value="ECO:0007669"/>
    <property type="project" value="UniProtKB-UniRule"/>
</dbReference>
<dbReference type="FunFam" id="3.30.860.10:FF:000001">
    <property type="entry name" value="30S ribosomal protein S19"/>
    <property type="match status" value="1"/>
</dbReference>
<dbReference type="Gene3D" id="3.30.860.10">
    <property type="entry name" value="30s Ribosomal Protein S19, Chain A"/>
    <property type="match status" value="1"/>
</dbReference>
<dbReference type="HAMAP" id="MF_00531">
    <property type="entry name" value="Ribosomal_uS19"/>
    <property type="match status" value="1"/>
</dbReference>
<dbReference type="InterPro" id="IPR002222">
    <property type="entry name" value="Ribosomal_uS19"/>
</dbReference>
<dbReference type="InterPro" id="IPR005732">
    <property type="entry name" value="Ribosomal_uS19_bac-type"/>
</dbReference>
<dbReference type="InterPro" id="IPR020934">
    <property type="entry name" value="Ribosomal_uS19_CS"/>
</dbReference>
<dbReference type="InterPro" id="IPR023575">
    <property type="entry name" value="Ribosomal_uS19_SF"/>
</dbReference>
<dbReference type="NCBIfam" id="TIGR01050">
    <property type="entry name" value="rpsS_bact"/>
    <property type="match status" value="1"/>
</dbReference>
<dbReference type="PANTHER" id="PTHR11880">
    <property type="entry name" value="RIBOSOMAL PROTEIN S19P FAMILY MEMBER"/>
    <property type="match status" value="1"/>
</dbReference>
<dbReference type="PANTHER" id="PTHR11880:SF8">
    <property type="entry name" value="SMALL RIBOSOMAL SUBUNIT PROTEIN US19M"/>
    <property type="match status" value="1"/>
</dbReference>
<dbReference type="Pfam" id="PF00203">
    <property type="entry name" value="Ribosomal_S19"/>
    <property type="match status" value="1"/>
</dbReference>
<dbReference type="PIRSF" id="PIRSF002144">
    <property type="entry name" value="Ribosomal_S19"/>
    <property type="match status" value="1"/>
</dbReference>
<dbReference type="PRINTS" id="PR00975">
    <property type="entry name" value="RIBOSOMALS19"/>
</dbReference>
<dbReference type="SUPFAM" id="SSF54570">
    <property type="entry name" value="Ribosomal protein S19"/>
    <property type="match status" value="1"/>
</dbReference>
<dbReference type="PROSITE" id="PS00323">
    <property type="entry name" value="RIBOSOMAL_S19"/>
    <property type="match status" value="1"/>
</dbReference>
<reference key="1">
    <citation type="journal article" date="2004" name="Nucleic Acids Res.">
        <title>Thermoadaptation trait revealed by the genome sequence of thermophilic Geobacillus kaustophilus.</title>
        <authorList>
            <person name="Takami H."/>
            <person name="Takaki Y."/>
            <person name="Chee G.-J."/>
            <person name="Nishi S."/>
            <person name="Shimamura S."/>
            <person name="Suzuki H."/>
            <person name="Matsui S."/>
            <person name="Uchiyama I."/>
        </authorList>
    </citation>
    <scope>NUCLEOTIDE SEQUENCE [LARGE SCALE GENOMIC DNA]</scope>
    <source>
        <strain>HTA426</strain>
    </source>
</reference>
<accession>Q5L3Z3</accession>
<proteinExistence type="inferred from homology"/>
<evidence type="ECO:0000255" key="1">
    <source>
        <dbReference type="HAMAP-Rule" id="MF_00531"/>
    </source>
</evidence>
<evidence type="ECO:0000305" key="2"/>
<comment type="function">
    <text evidence="1">Protein S19 forms a complex with S13 that binds strongly to the 16S ribosomal RNA.</text>
</comment>
<comment type="similarity">
    <text evidence="1">Belongs to the universal ribosomal protein uS19 family.</text>
</comment>
<feature type="chain" id="PRO_0000129827" description="Small ribosomal subunit protein uS19">
    <location>
        <begin position="1"/>
        <end position="92"/>
    </location>
</feature>